<sequence length="304" mass="35152">MQRDEIPAIIPTDIEEKKQAAQRWFEELRDRICASYEQLEDELQGPLSDREPGRFVRTPWQKDEGRGGGGVMSIMHGRVFEKVGVHVSTVYGEFSPEFRKQIPGAEEDPRYWASGISLIAHPQNPNVPAVHMNTRMVVTTRQWFGGGADLTPVLDNRRTQDDPDTLAFHKAFRFICEKHKDIVDYQRVKDWCDEYFFLPHRNEARGTGGIFYDWLHSPDEKGGWDADFAYTRDVGRGFSVVYPHLVRQNFNKDWTDADRNEQLIRRGRYVEFNLLYDRGTIFGLKTGGNVNSILSSMPPVVKWP</sequence>
<dbReference type="EC" id="1.3.3.3" evidence="1"/>
<dbReference type="EMBL" id="CP000758">
    <property type="protein sequence ID" value="ABS14332.1"/>
    <property type="molecule type" value="Genomic_DNA"/>
</dbReference>
<dbReference type="RefSeq" id="WP_012091655.1">
    <property type="nucleotide sequence ID" value="NC_009667.1"/>
</dbReference>
<dbReference type="SMR" id="A6WZC8"/>
<dbReference type="STRING" id="439375.Oant_1616"/>
<dbReference type="KEGG" id="oan:Oant_1616"/>
<dbReference type="PATRIC" id="fig|439375.7.peg.1703"/>
<dbReference type="eggNOG" id="COG0408">
    <property type="taxonomic scope" value="Bacteria"/>
</dbReference>
<dbReference type="HOGENOM" id="CLU_026169_0_1_5"/>
<dbReference type="PhylomeDB" id="A6WZC8"/>
<dbReference type="UniPathway" id="UPA00251">
    <property type="reaction ID" value="UER00322"/>
</dbReference>
<dbReference type="Proteomes" id="UP000002301">
    <property type="component" value="Chromosome 1"/>
</dbReference>
<dbReference type="GO" id="GO:0005737">
    <property type="term" value="C:cytoplasm"/>
    <property type="evidence" value="ECO:0007669"/>
    <property type="project" value="UniProtKB-SubCell"/>
</dbReference>
<dbReference type="GO" id="GO:0004109">
    <property type="term" value="F:coproporphyrinogen oxidase activity"/>
    <property type="evidence" value="ECO:0007669"/>
    <property type="project" value="UniProtKB-UniRule"/>
</dbReference>
<dbReference type="GO" id="GO:0046872">
    <property type="term" value="F:metal ion binding"/>
    <property type="evidence" value="ECO:0007669"/>
    <property type="project" value="UniProtKB-KW"/>
</dbReference>
<dbReference type="GO" id="GO:0042803">
    <property type="term" value="F:protein homodimerization activity"/>
    <property type="evidence" value="ECO:0000250"/>
    <property type="project" value="UniProtKB"/>
</dbReference>
<dbReference type="GO" id="GO:0006782">
    <property type="term" value="P:protoporphyrinogen IX biosynthetic process"/>
    <property type="evidence" value="ECO:0007669"/>
    <property type="project" value="UniProtKB-UniRule"/>
</dbReference>
<dbReference type="FunFam" id="3.40.1500.10:FF:000005">
    <property type="entry name" value="Oxygen-dependent coproporphyrinogen-III oxidase"/>
    <property type="match status" value="1"/>
</dbReference>
<dbReference type="Gene3D" id="3.40.1500.10">
    <property type="entry name" value="Coproporphyrinogen III oxidase, aerobic"/>
    <property type="match status" value="1"/>
</dbReference>
<dbReference type="HAMAP" id="MF_00333">
    <property type="entry name" value="Coprogen_oxidas"/>
    <property type="match status" value="1"/>
</dbReference>
<dbReference type="InterPro" id="IPR001260">
    <property type="entry name" value="Coprogen_oxidase_aer"/>
</dbReference>
<dbReference type="InterPro" id="IPR036406">
    <property type="entry name" value="Coprogen_oxidase_aer_sf"/>
</dbReference>
<dbReference type="InterPro" id="IPR018375">
    <property type="entry name" value="Coprogen_oxidase_CS"/>
</dbReference>
<dbReference type="NCBIfam" id="NF003727">
    <property type="entry name" value="PRK05330.1"/>
    <property type="match status" value="1"/>
</dbReference>
<dbReference type="PANTHER" id="PTHR10755">
    <property type="entry name" value="COPROPORPHYRINOGEN III OXIDASE, MITOCHONDRIAL"/>
    <property type="match status" value="1"/>
</dbReference>
<dbReference type="PANTHER" id="PTHR10755:SF0">
    <property type="entry name" value="OXYGEN-DEPENDENT COPROPORPHYRINOGEN-III OXIDASE, MITOCHONDRIAL"/>
    <property type="match status" value="1"/>
</dbReference>
<dbReference type="Pfam" id="PF01218">
    <property type="entry name" value="Coprogen_oxidas"/>
    <property type="match status" value="1"/>
</dbReference>
<dbReference type="PIRSF" id="PIRSF000166">
    <property type="entry name" value="Coproporphyri_ox"/>
    <property type="match status" value="1"/>
</dbReference>
<dbReference type="PRINTS" id="PR00073">
    <property type="entry name" value="COPRGNOXDASE"/>
</dbReference>
<dbReference type="SUPFAM" id="SSF102886">
    <property type="entry name" value="Coproporphyrinogen III oxidase"/>
    <property type="match status" value="1"/>
</dbReference>
<dbReference type="PROSITE" id="PS01021">
    <property type="entry name" value="COPROGEN_OXIDASE"/>
    <property type="match status" value="1"/>
</dbReference>
<evidence type="ECO:0000255" key="1">
    <source>
        <dbReference type="HAMAP-Rule" id="MF_00333"/>
    </source>
</evidence>
<evidence type="ECO:0000256" key="2">
    <source>
        <dbReference type="SAM" id="MobiDB-lite"/>
    </source>
</evidence>
<feature type="chain" id="PRO_1000119808" description="Oxygen-dependent coproporphyrinogen-III oxidase">
    <location>
        <begin position="1"/>
        <end position="304"/>
    </location>
</feature>
<feature type="region of interest" description="Disordered" evidence="2">
    <location>
        <begin position="43"/>
        <end position="68"/>
    </location>
</feature>
<feature type="region of interest" description="Important for dimerization" evidence="1">
    <location>
        <begin position="269"/>
        <end position="304"/>
    </location>
</feature>
<feature type="compositionally biased region" description="Basic and acidic residues" evidence="2">
    <location>
        <begin position="48"/>
        <end position="66"/>
    </location>
</feature>
<feature type="active site" description="Proton donor" evidence="1">
    <location>
        <position position="131"/>
    </location>
</feature>
<feature type="binding site" evidence="1">
    <location>
        <position position="117"/>
    </location>
    <ligand>
        <name>substrate</name>
    </ligand>
</feature>
<feature type="binding site" evidence="1">
    <location>
        <position position="121"/>
    </location>
    <ligand>
        <name>a divalent metal cation</name>
        <dbReference type="ChEBI" id="CHEBI:60240"/>
    </ligand>
</feature>
<feature type="binding site" evidence="1">
    <location>
        <position position="131"/>
    </location>
    <ligand>
        <name>a divalent metal cation</name>
        <dbReference type="ChEBI" id="CHEBI:60240"/>
    </ligand>
</feature>
<feature type="binding site" evidence="1">
    <location>
        <begin position="133"/>
        <end position="135"/>
    </location>
    <ligand>
        <name>substrate</name>
    </ligand>
</feature>
<feature type="binding site" evidence="1">
    <location>
        <position position="169"/>
    </location>
    <ligand>
        <name>a divalent metal cation</name>
        <dbReference type="ChEBI" id="CHEBI:60240"/>
    </ligand>
</feature>
<feature type="binding site" evidence="1">
    <location>
        <position position="200"/>
    </location>
    <ligand>
        <name>a divalent metal cation</name>
        <dbReference type="ChEBI" id="CHEBI:60240"/>
    </ligand>
</feature>
<feature type="binding site" evidence="1">
    <location>
        <begin position="287"/>
        <end position="289"/>
    </location>
    <ligand>
        <name>substrate</name>
    </ligand>
</feature>
<feature type="site" description="Important for dimerization" evidence="1">
    <location>
        <position position="200"/>
    </location>
</feature>
<name>HEM6_BRUA4</name>
<gene>
    <name evidence="1" type="primary">hemF</name>
    <name type="ordered locus">Oant_1616</name>
</gene>
<protein>
    <recommendedName>
        <fullName evidence="1">Oxygen-dependent coproporphyrinogen-III oxidase</fullName>
        <shortName evidence="1">CPO</shortName>
        <shortName evidence="1">Coprogen oxidase</shortName>
        <shortName evidence="1">Coproporphyrinogenase</shortName>
        <ecNumber evidence="1">1.3.3.3</ecNumber>
    </recommendedName>
</protein>
<comment type="function">
    <text evidence="1">Involved in the heme biosynthesis. Catalyzes the aerobic oxidative decarboxylation of propionate groups of rings A and B of coproporphyrinogen-III to yield the vinyl groups in protoporphyrinogen-IX.</text>
</comment>
<comment type="catalytic activity">
    <reaction evidence="1">
        <text>coproporphyrinogen III + O2 + 2 H(+) = protoporphyrinogen IX + 2 CO2 + 2 H2O</text>
        <dbReference type="Rhea" id="RHEA:18257"/>
        <dbReference type="ChEBI" id="CHEBI:15377"/>
        <dbReference type="ChEBI" id="CHEBI:15378"/>
        <dbReference type="ChEBI" id="CHEBI:15379"/>
        <dbReference type="ChEBI" id="CHEBI:16526"/>
        <dbReference type="ChEBI" id="CHEBI:57307"/>
        <dbReference type="ChEBI" id="CHEBI:57309"/>
        <dbReference type="EC" id="1.3.3.3"/>
    </reaction>
</comment>
<comment type="cofactor">
    <cofactor evidence="1">
        <name>a divalent metal cation</name>
        <dbReference type="ChEBI" id="CHEBI:60240"/>
    </cofactor>
</comment>
<comment type="pathway">
    <text evidence="1">Porphyrin-containing compound metabolism; protoporphyrin-IX biosynthesis; protoporphyrinogen-IX from coproporphyrinogen-III (O2 route): step 1/1.</text>
</comment>
<comment type="subunit">
    <text evidence="1">Homodimer.</text>
</comment>
<comment type="subcellular location">
    <subcellularLocation>
        <location evidence="1">Cytoplasm</location>
    </subcellularLocation>
</comment>
<comment type="similarity">
    <text evidence="1">Belongs to the aerobic coproporphyrinogen-III oxidase family.</text>
</comment>
<reference key="1">
    <citation type="journal article" date="2011" name="J. Bacteriol.">
        <title>Genome of Ochrobactrum anthropi ATCC 49188 T, a versatile opportunistic pathogen and symbiont of several eukaryotic hosts.</title>
        <authorList>
            <person name="Chain P.S."/>
            <person name="Lang D.M."/>
            <person name="Comerci D.J."/>
            <person name="Malfatti S.A."/>
            <person name="Vergez L.M."/>
            <person name="Shin M."/>
            <person name="Ugalde R.A."/>
            <person name="Garcia E."/>
            <person name="Tolmasky M.E."/>
        </authorList>
    </citation>
    <scope>NUCLEOTIDE SEQUENCE [LARGE SCALE GENOMIC DNA]</scope>
    <source>
        <strain>ATCC 49188 / DSM 6882 / CCUG 24695 / JCM 21032 / LMG 3331 / NBRC 15819 / NCTC 12168 / Alc 37</strain>
    </source>
</reference>
<accession>A6WZC8</accession>
<keyword id="KW-0963">Cytoplasm</keyword>
<keyword id="KW-0350">Heme biosynthesis</keyword>
<keyword id="KW-0479">Metal-binding</keyword>
<keyword id="KW-0560">Oxidoreductase</keyword>
<keyword id="KW-0627">Porphyrin biosynthesis</keyword>
<keyword id="KW-1185">Reference proteome</keyword>
<proteinExistence type="inferred from homology"/>
<organism>
    <name type="scientific">Brucella anthropi (strain ATCC 49188 / DSM 6882 / CCUG 24695 / JCM 21032 / LMG 3331 / NBRC 15819 / NCTC 12168 / Alc 37)</name>
    <name type="common">Ochrobactrum anthropi</name>
    <dbReference type="NCBI Taxonomy" id="439375"/>
    <lineage>
        <taxon>Bacteria</taxon>
        <taxon>Pseudomonadati</taxon>
        <taxon>Pseudomonadota</taxon>
        <taxon>Alphaproteobacteria</taxon>
        <taxon>Hyphomicrobiales</taxon>
        <taxon>Brucellaceae</taxon>
        <taxon>Brucella/Ochrobactrum group</taxon>
        <taxon>Brucella</taxon>
    </lineage>
</organism>